<organism>
    <name type="scientific">Olimarabidopsis pumila</name>
    <name type="common">Dwarf rocket</name>
    <name type="synonym">Arabidopsis griffithiana</name>
    <dbReference type="NCBI Taxonomy" id="74718"/>
    <lineage>
        <taxon>Eukaryota</taxon>
        <taxon>Viridiplantae</taxon>
        <taxon>Streptophyta</taxon>
        <taxon>Embryophyta</taxon>
        <taxon>Tracheophyta</taxon>
        <taxon>Spermatophyta</taxon>
        <taxon>Magnoliopsida</taxon>
        <taxon>eudicotyledons</taxon>
        <taxon>Gunneridae</taxon>
        <taxon>Pentapetalae</taxon>
        <taxon>rosids</taxon>
        <taxon>malvids</taxon>
        <taxon>Brassicales</taxon>
        <taxon>Brassicaceae</taxon>
        <taxon>Alyssopsideae</taxon>
        <taxon>Olimarabidopsis</taxon>
    </lineage>
</organism>
<gene>
    <name evidence="1" type="primary">petL</name>
</gene>
<evidence type="ECO:0000255" key="1">
    <source>
        <dbReference type="HAMAP-Rule" id="MF_00433"/>
    </source>
</evidence>
<geneLocation type="chloroplast"/>
<protein>
    <recommendedName>
        <fullName evidence="1">Cytochrome b6-f complex subunit 6</fullName>
    </recommendedName>
    <alternativeName>
        <fullName evidence="1">Cytochrome b6-f complex subunit PetL</fullName>
    </alternativeName>
    <alternativeName>
        <fullName evidence="1">Cytochrome b6-f complex subunit VI</fullName>
    </alternativeName>
</protein>
<comment type="function">
    <text evidence="1">Component of the cytochrome b6-f complex, which mediates electron transfer between photosystem II (PSII) and photosystem I (PSI), cyclic electron flow around PSI, and state transitions. PetL is important for photoautotrophic growth as well as for electron transfer efficiency and stability of the cytochrome b6-f complex.</text>
</comment>
<comment type="subunit">
    <text evidence="1">The 4 large subunits of the cytochrome b6-f complex are cytochrome b6, subunit IV (17 kDa polypeptide, PetD), cytochrome f and the Rieske protein, while the 4 small subunits are PetG, PetL, PetM and PetN. The complex functions as a dimer.</text>
</comment>
<comment type="subcellular location">
    <subcellularLocation>
        <location evidence="1">Plastid</location>
        <location evidence="1">Chloroplast thylakoid membrane</location>
        <topology evidence="1">Single-pass membrane protein</topology>
    </subcellularLocation>
</comment>
<comment type="similarity">
    <text evidence="1">Belongs to the PetL family.</text>
</comment>
<proteinExistence type="inferred from homology"/>
<reference key="1">
    <citation type="submission" date="2007-03" db="EMBL/GenBank/DDBJ databases">
        <title>Sequence analysis of Arabidopsis pumila JS2 chloroplast DNA.</title>
        <authorList>
            <person name="Hosouchi T."/>
            <person name="Tsuruoka H."/>
            <person name="Kotani H."/>
        </authorList>
    </citation>
    <scope>NUCLEOTIDE SEQUENCE [LARGE SCALE GENOMIC DNA]</scope>
</reference>
<feature type="chain" id="PRO_0000300150" description="Cytochrome b6-f complex subunit 6">
    <location>
        <begin position="1"/>
        <end position="31"/>
    </location>
</feature>
<feature type="transmembrane region" description="Helical" evidence="1">
    <location>
        <begin position="4"/>
        <end position="24"/>
    </location>
</feature>
<keyword id="KW-0150">Chloroplast</keyword>
<keyword id="KW-0249">Electron transport</keyword>
<keyword id="KW-0472">Membrane</keyword>
<keyword id="KW-0602">Photosynthesis</keyword>
<keyword id="KW-0934">Plastid</keyword>
<keyword id="KW-0793">Thylakoid</keyword>
<keyword id="KW-0812">Transmembrane</keyword>
<keyword id="KW-1133">Transmembrane helix</keyword>
<keyword id="KW-0813">Transport</keyword>
<accession>A4QJU9</accession>
<name>PETL_OLIPU</name>
<sequence>MPTITSYFGFLLAALTITSVLFIGLSKIRLI</sequence>
<dbReference type="EMBL" id="AP009368">
    <property type="protein sequence ID" value="BAF49957.1"/>
    <property type="molecule type" value="Genomic_DNA"/>
</dbReference>
<dbReference type="RefSeq" id="YP_001123133.1">
    <property type="nucleotide sequence ID" value="NC_009267.1"/>
</dbReference>
<dbReference type="SMR" id="A4QJU9"/>
<dbReference type="GeneID" id="4962386"/>
<dbReference type="GO" id="GO:0009535">
    <property type="term" value="C:chloroplast thylakoid membrane"/>
    <property type="evidence" value="ECO:0007669"/>
    <property type="project" value="UniProtKB-SubCell"/>
</dbReference>
<dbReference type="GO" id="GO:0009512">
    <property type="term" value="C:cytochrome b6f complex"/>
    <property type="evidence" value="ECO:0007669"/>
    <property type="project" value="InterPro"/>
</dbReference>
<dbReference type="GO" id="GO:0045158">
    <property type="term" value="F:electron transporter, transferring electrons within cytochrome b6/f complex of photosystem II activity"/>
    <property type="evidence" value="ECO:0007669"/>
    <property type="project" value="UniProtKB-UniRule"/>
</dbReference>
<dbReference type="GO" id="GO:0015979">
    <property type="term" value="P:photosynthesis"/>
    <property type="evidence" value="ECO:0007669"/>
    <property type="project" value="UniProtKB-KW"/>
</dbReference>
<dbReference type="HAMAP" id="MF_00433">
    <property type="entry name" value="Cytb6_f_PetL"/>
    <property type="match status" value="1"/>
</dbReference>
<dbReference type="InterPro" id="IPR007802">
    <property type="entry name" value="Cyt_b6/f_cplx_su6"/>
</dbReference>
<dbReference type="PANTHER" id="PTHR37266">
    <property type="entry name" value="CYTOCHROME B6-F COMPLEX SUBUNIT 6"/>
    <property type="match status" value="1"/>
</dbReference>
<dbReference type="PANTHER" id="PTHR37266:SF1">
    <property type="entry name" value="CYTOCHROME B6-F COMPLEX SUBUNIT 6"/>
    <property type="match status" value="1"/>
</dbReference>
<dbReference type="Pfam" id="PF05115">
    <property type="entry name" value="PetL"/>
    <property type="match status" value="1"/>
</dbReference>